<reference key="1">
    <citation type="submission" date="2005-08" db="EMBL/GenBank/DDBJ databases">
        <title>Complete sequence of Chlorobium chlorochromatii CaD3.</title>
        <authorList>
            <consortium name="US DOE Joint Genome Institute"/>
            <person name="Copeland A."/>
            <person name="Lucas S."/>
            <person name="Lapidus A."/>
            <person name="Barry K."/>
            <person name="Detter J.C."/>
            <person name="Glavina T."/>
            <person name="Hammon N."/>
            <person name="Israni S."/>
            <person name="Pitluck S."/>
            <person name="Bryant D."/>
            <person name="Schmutz J."/>
            <person name="Larimer F."/>
            <person name="Land M."/>
            <person name="Kyrpides N."/>
            <person name="Ivanova N."/>
            <person name="Richardson P."/>
        </authorList>
    </citation>
    <scope>NUCLEOTIDE SEQUENCE [LARGE SCALE GENOMIC DNA]</scope>
    <source>
        <strain>CaD3</strain>
    </source>
</reference>
<proteinExistence type="inferred from homology"/>
<protein>
    <recommendedName>
        <fullName evidence="1">Transcription antitermination protein NusB</fullName>
    </recommendedName>
    <alternativeName>
        <fullName evidence="1">Antitermination factor NusB</fullName>
    </alternativeName>
</protein>
<accession>Q3ATI5</accession>
<comment type="function">
    <text evidence="1">Involved in transcription antitermination. Required for transcription of ribosomal RNA (rRNA) genes. Binds specifically to the boxA antiterminator sequence of the ribosomal RNA (rrn) operons.</text>
</comment>
<comment type="similarity">
    <text evidence="1">Belongs to the NusB family.</text>
</comment>
<gene>
    <name evidence="1" type="primary">nusB</name>
    <name type="ordered locus">Cag_0417</name>
</gene>
<name>NUSB_CHLCH</name>
<keyword id="KW-0694">RNA-binding</keyword>
<keyword id="KW-0804">Transcription</keyword>
<keyword id="KW-0889">Transcription antitermination</keyword>
<keyword id="KW-0805">Transcription regulation</keyword>
<feature type="chain" id="PRO_0000265503" description="Transcription antitermination protein NusB">
    <location>
        <begin position="1"/>
        <end position="169"/>
    </location>
</feature>
<feature type="region of interest" description="Disordered" evidence="2">
    <location>
        <begin position="147"/>
        <end position="169"/>
    </location>
</feature>
<evidence type="ECO:0000255" key="1">
    <source>
        <dbReference type="HAMAP-Rule" id="MF_00073"/>
    </source>
</evidence>
<evidence type="ECO:0000256" key="2">
    <source>
        <dbReference type="SAM" id="MobiDB-lite"/>
    </source>
</evidence>
<organism>
    <name type="scientific">Chlorobium chlorochromatii (strain CaD3)</name>
    <dbReference type="NCBI Taxonomy" id="340177"/>
    <lineage>
        <taxon>Bacteria</taxon>
        <taxon>Pseudomonadati</taxon>
        <taxon>Chlorobiota</taxon>
        <taxon>Chlorobiia</taxon>
        <taxon>Chlorobiales</taxon>
        <taxon>Chlorobiaceae</taxon>
        <taxon>Chlorobium/Pelodictyon group</taxon>
        <taxon>Chlorobium</taxon>
    </lineage>
</organism>
<sequence>MKTYRRQIREKILQALYTVELRGITLDEAAGWLLTEEILADPNAMKFFNLLLSSIKAHREEIDNYIAQQTFNWDMSRIAIIDKNIIRMALTEILYCEDIPPKVSINEAIEIAKKFNSTDKSSKFVNGILDAIFNKLKTEGKVHKNGRGLIDQSFSRPQKPESEATEIEE</sequence>
<dbReference type="EMBL" id="CP000108">
    <property type="protein sequence ID" value="ABB27690.1"/>
    <property type="molecule type" value="Genomic_DNA"/>
</dbReference>
<dbReference type="SMR" id="Q3ATI5"/>
<dbReference type="STRING" id="340177.Cag_0417"/>
<dbReference type="KEGG" id="cch:Cag_0417"/>
<dbReference type="eggNOG" id="COG0781">
    <property type="taxonomic scope" value="Bacteria"/>
</dbReference>
<dbReference type="HOGENOM" id="CLU_087843_3_0_10"/>
<dbReference type="OrthoDB" id="9787568at2"/>
<dbReference type="GO" id="GO:0005829">
    <property type="term" value="C:cytosol"/>
    <property type="evidence" value="ECO:0007669"/>
    <property type="project" value="TreeGrafter"/>
</dbReference>
<dbReference type="GO" id="GO:0003723">
    <property type="term" value="F:RNA binding"/>
    <property type="evidence" value="ECO:0007669"/>
    <property type="project" value="UniProtKB-UniRule"/>
</dbReference>
<dbReference type="GO" id="GO:0006353">
    <property type="term" value="P:DNA-templated transcription termination"/>
    <property type="evidence" value="ECO:0007669"/>
    <property type="project" value="UniProtKB-UniRule"/>
</dbReference>
<dbReference type="GO" id="GO:0031564">
    <property type="term" value="P:transcription antitermination"/>
    <property type="evidence" value="ECO:0007669"/>
    <property type="project" value="UniProtKB-KW"/>
</dbReference>
<dbReference type="CDD" id="cd00619">
    <property type="entry name" value="Terminator_NusB"/>
    <property type="match status" value="1"/>
</dbReference>
<dbReference type="Gene3D" id="1.10.940.10">
    <property type="entry name" value="NusB-like"/>
    <property type="match status" value="1"/>
</dbReference>
<dbReference type="HAMAP" id="MF_00073">
    <property type="entry name" value="NusB"/>
    <property type="match status" value="1"/>
</dbReference>
<dbReference type="InterPro" id="IPR035926">
    <property type="entry name" value="NusB-like_sf"/>
</dbReference>
<dbReference type="InterPro" id="IPR011605">
    <property type="entry name" value="NusB_fam"/>
</dbReference>
<dbReference type="InterPro" id="IPR006027">
    <property type="entry name" value="NusB_RsmB_TIM44"/>
</dbReference>
<dbReference type="NCBIfam" id="TIGR01951">
    <property type="entry name" value="nusB"/>
    <property type="match status" value="1"/>
</dbReference>
<dbReference type="PANTHER" id="PTHR11078:SF3">
    <property type="entry name" value="ANTITERMINATION NUSB DOMAIN-CONTAINING PROTEIN"/>
    <property type="match status" value="1"/>
</dbReference>
<dbReference type="PANTHER" id="PTHR11078">
    <property type="entry name" value="N UTILIZATION SUBSTANCE PROTEIN B-RELATED"/>
    <property type="match status" value="1"/>
</dbReference>
<dbReference type="Pfam" id="PF01029">
    <property type="entry name" value="NusB"/>
    <property type="match status" value="1"/>
</dbReference>
<dbReference type="SUPFAM" id="SSF48013">
    <property type="entry name" value="NusB-like"/>
    <property type="match status" value="1"/>
</dbReference>